<evidence type="ECO:0000255" key="1">
    <source>
        <dbReference type="HAMAP-Rule" id="MF_00735"/>
    </source>
</evidence>
<sequence length="298" mass="31866">MSLFELILLAPVDEIETLSEALDALDALSVSVEDADAQTPAEQALFGEPGMPPPKAGWERSRVVSLFASEALARDAASVLTAQDFFAGCQLVAIQAVPEQDWVRLTQSQFTPVEITPEFWIVPTWHEPPEQAKQLIRLDPGLAFGTGTHPTTRMCLRWIAGQGAANKPLARVLDYGCGSGILAIGAAKFGAVDIDAVDIDEAAVESTRANAEANHVTLNAGLPDKAVGAYQTVLANILATPLKVLAPLLCSHVQKGGSLVLAGILERQADELKAAYQPYCQLQVLDQEEGWILMGARF</sequence>
<protein>
    <recommendedName>
        <fullName evidence="1">Ribosomal protein L11 methyltransferase</fullName>
        <shortName evidence="1">L11 Mtase</shortName>
        <ecNumber evidence="1">2.1.1.-</ecNumber>
    </recommendedName>
</protein>
<reference key="1">
    <citation type="journal article" date="2008" name="Appl. Environ. Microbiol.">
        <title>The genome of Polaromonas sp. strain JS666: insights into the evolution of a hydrocarbon- and xenobiotic-degrading bacterium, and features of relevance to biotechnology.</title>
        <authorList>
            <person name="Mattes T.E."/>
            <person name="Alexander A.K."/>
            <person name="Richardson P.M."/>
            <person name="Munk A.C."/>
            <person name="Han C.S."/>
            <person name="Stothard P."/>
            <person name="Coleman N.V."/>
        </authorList>
    </citation>
    <scope>NUCLEOTIDE SEQUENCE [LARGE SCALE GENOMIC DNA]</scope>
    <source>
        <strain>JS666 / ATCC BAA-500</strain>
    </source>
</reference>
<organism>
    <name type="scientific">Polaromonas sp. (strain JS666 / ATCC BAA-500)</name>
    <dbReference type="NCBI Taxonomy" id="296591"/>
    <lineage>
        <taxon>Bacteria</taxon>
        <taxon>Pseudomonadati</taxon>
        <taxon>Pseudomonadota</taxon>
        <taxon>Betaproteobacteria</taxon>
        <taxon>Burkholderiales</taxon>
        <taxon>Comamonadaceae</taxon>
        <taxon>Polaromonas</taxon>
    </lineage>
</organism>
<name>PRMA_POLSJ</name>
<proteinExistence type="inferred from homology"/>
<dbReference type="EC" id="2.1.1.-" evidence="1"/>
<dbReference type="EMBL" id="CP000316">
    <property type="protein sequence ID" value="ABE43053.1"/>
    <property type="molecule type" value="Genomic_DNA"/>
</dbReference>
<dbReference type="SMR" id="Q12EI9"/>
<dbReference type="STRING" id="296591.Bpro_1101"/>
<dbReference type="KEGG" id="pol:Bpro_1101"/>
<dbReference type="eggNOG" id="COG2264">
    <property type="taxonomic scope" value="Bacteria"/>
</dbReference>
<dbReference type="HOGENOM" id="CLU_049382_4_1_4"/>
<dbReference type="Proteomes" id="UP000001983">
    <property type="component" value="Chromosome"/>
</dbReference>
<dbReference type="GO" id="GO:0005829">
    <property type="term" value="C:cytosol"/>
    <property type="evidence" value="ECO:0007669"/>
    <property type="project" value="TreeGrafter"/>
</dbReference>
<dbReference type="GO" id="GO:0016279">
    <property type="term" value="F:protein-lysine N-methyltransferase activity"/>
    <property type="evidence" value="ECO:0007669"/>
    <property type="project" value="TreeGrafter"/>
</dbReference>
<dbReference type="GO" id="GO:0032259">
    <property type="term" value="P:methylation"/>
    <property type="evidence" value="ECO:0007669"/>
    <property type="project" value="UniProtKB-KW"/>
</dbReference>
<dbReference type="CDD" id="cd02440">
    <property type="entry name" value="AdoMet_MTases"/>
    <property type="match status" value="1"/>
</dbReference>
<dbReference type="Gene3D" id="3.40.50.150">
    <property type="entry name" value="Vaccinia Virus protein VP39"/>
    <property type="match status" value="1"/>
</dbReference>
<dbReference type="HAMAP" id="MF_00735">
    <property type="entry name" value="Methyltr_PrmA"/>
    <property type="match status" value="1"/>
</dbReference>
<dbReference type="InterPro" id="IPR050078">
    <property type="entry name" value="Ribosomal_L11_MeTrfase_PrmA"/>
</dbReference>
<dbReference type="InterPro" id="IPR004498">
    <property type="entry name" value="Ribosomal_PrmA_MeTrfase"/>
</dbReference>
<dbReference type="InterPro" id="IPR029063">
    <property type="entry name" value="SAM-dependent_MTases_sf"/>
</dbReference>
<dbReference type="NCBIfam" id="TIGR00406">
    <property type="entry name" value="prmA"/>
    <property type="match status" value="1"/>
</dbReference>
<dbReference type="PANTHER" id="PTHR43648">
    <property type="entry name" value="ELECTRON TRANSFER FLAVOPROTEIN BETA SUBUNIT LYSINE METHYLTRANSFERASE"/>
    <property type="match status" value="1"/>
</dbReference>
<dbReference type="PANTHER" id="PTHR43648:SF1">
    <property type="entry name" value="ELECTRON TRANSFER FLAVOPROTEIN BETA SUBUNIT LYSINE METHYLTRANSFERASE"/>
    <property type="match status" value="1"/>
</dbReference>
<dbReference type="Pfam" id="PF06325">
    <property type="entry name" value="PrmA"/>
    <property type="match status" value="1"/>
</dbReference>
<dbReference type="PIRSF" id="PIRSF000401">
    <property type="entry name" value="RPL11_MTase"/>
    <property type="match status" value="1"/>
</dbReference>
<dbReference type="SUPFAM" id="SSF53335">
    <property type="entry name" value="S-adenosyl-L-methionine-dependent methyltransferases"/>
    <property type="match status" value="1"/>
</dbReference>
<comment type="function">
    <text evidence="1">Methylates ribosomal protein L11.</text>
</comment>
<comment type="catalytic activity">
    <reaction evidence="1">
        <text>L-lysyl-[protein] + 3 S-adenosyl-L-methionine = N(6),N(6),N(6)-trimethyl-L-lysyl-[protein] + 3 S-adenosyl-L-homocysteine + 3 H(+)</text>
        <dbReference type="Rhea" id="RHEA:54192"/>
        <dbReference type="Rhea" id="RHEA-COMP:9752"/>
        <dbReference type="Rhea" id="RHEA-COMP:13826"/>
        <dbReference type="ChEBI" id="CHEBI:15378"/>
        <dbReference type="ChEBI" id="CHEBI:29969"/>
        <dbReference type="ChEBI" id="CHEBI:57856"/>
        <dbReference type="ChEBI" id="CHEBI:59789"/>
        <dbReference type="ChEBI" id="CHEBI:61961"/>
    </reaction>
</comment>
<comment type="subcellular location">
    <subcellularLocation>
        <location evidence="1">Cytoplasm</location>
    </subcellularLocation>
</comment>
<comment type="similarity">
    <text evidence="1">Belongs to the methyltransferase superfamily. PrmA family.</text>
</comment>
<accession>Q12EI9</accession>
<feature type="chain" id="PRO_1000046056" description="Ribosomal protein L11 methyltransferase">
    <location>
        <begin position="1"/>
        <end position="298"/>
    </location>
</feature>
<feature type="binding site" evidence="1">
    <location>
        <position position="152"/>
    </location>
    <ligand>
        <name>S-adenosyl-L-methionine</name>
        <dbReference type="ChEBI" id="CHEBI:59789"/>
    </ligand>
</feature>
<feature type="binding site" evidence="1">
    <location>
        <position position="176"/>
    </location>
    <ligand>
        <name>S-adenosyl-L-methionine</name>
        <dbReference type="ChEBI" id="CHEBI:59789"/>
    </ligand>
</feature>
<feature type="binding site" evidence="1">
    <location>
        <position position="198"/>
    </location>
    <ligand>
        <name>S-adenosyl-L-methionine</name>
        <dbReference type="ChEBI" id="CHEBI:59789"/>
    </ligand>
</feature>
<feature type="binding site" evidence="1">
    <location>
        <position position="236"/>
    </location>
    <ligand>
        <name>S-adenosyl-L-methionine</name>
        <dbReference type="ChEBI" id="CHEBI:59789"/>
    </ligand>
</feature>
<gene>
    <name evidence="1" type="primary">prmA</name>
    <name type="ordered locus">Bpro_1101</name>
</gene>
<keyword id="KW-0963">Cytoplasm</keyword>
<keyword id="KW-0489">Methyltransferase</keyword>
<keyword id="KW-1185">Reference proteome</keyword>
<keyword id="KW-0949">S-adenosyl-L-methionine</keyword>
<keyword id="KW-0808">Transferase</keyword>